<accession>B5F526</accession>
<gene>
    <name evidence="1" type="primary">deoB</name>
    <name type="ordered locus">SeAg_B4891</name>
</gene>
<comment type="function">
    <text evidence="1">Isomerase that catalyzes the conversion of deoxy-ribose 1-phosphate (dRib-1-P) and ribose 1-phosphate (Rib-1-P) to deoxy-ribose 5-phosphate (dRib-5-P) and ribose 5-phosphate (Rib-5-P), respectively.</text>
</comment>
<comment type="catalytic activity">
    <reaction evidence="1">
        <text>2-deoxy-alpha-D-ribose 1-phosphate = 2-deoxy-D-ribose 5-phosphate</text>
        <dbReference type="Rhea" id="RHEA:27658"/>
        <dbReference type="ChEBI" id="CHEBI:57259"/>
        <dbReference type="ChEBI" id="CHEBI:62877"/>
        <dbReference type="EC" id="5.4.2.7"/>
    </reaction>
</comment>
<comment type="catalytic activity">
    <reaction evidence="1">
        <text>alpha-D-ribose 1-phosphate = D-ribose 5-phosphate</text>
        <dbReference type="Rhea" id="RHEA:18793"/>
        <dbReference type="ChEBI" id="CHEBI:57720"/>
        <dbReference type="ChEBI" id="CHEBI:78346"/>
        <dbReference type="EC" id="5.4.2.7"/>
    </reaction>
</comment>
<comment type="cofactor">
    <cofactor evidence="1">
        <name>Mn(2+)</name>
        <dbReference type="ChEBI" id="CHEBI:29035"/>
    </cofactor>
    <text evidence="1">Binds 2 manganese ions.</text>
</comment>
<comment type="pathway">
    <text evidence="1">Carbohydrate degradation; 2-deoxy-D-ribose 1-phosphate degradation; D-glyceraldehyde 3-phosphate and acetaldehyde from 2-deoxy-alpha-D-ribose 1-phosphate: step 1/2.</text>
</comment>
<comment type="subcellular location">
    <subcellularLocation>
        <location evidence="1">Cytoplasm</location>
    </subcellularLocation>
</comment>
<comment type="similarity">
    <text evidence="1">Belongs to the phosphopentomutase family.</text>
</comment>
<sequence length="407" mass="44244">MKRAFIMVLDSFGIGATEDADRFGDVGSDTLGHIAEACAKGEADNGRKGPLNLPNLTRLGLVKAHEGSTGKIAAGMDGNADVIGAYAWAHELSSGKDTPSGHWEIAGVPVLFDWGYFSDHENSFPQELLDKLVKRANLPGYLGNCHSSGTVILDQLGEEHMKTGKPIFYTSADSVFQIACHEETFGLDKLYELCEIAREELTEGGYNIGRVIARPFIGDKAGNFQRTGNRHDLAVEPPAPTVLQKLVDEKQGHVVSVGKIADIYANCGITKKVKATGLDALFDATLKEMKEAGDKTIVFTNFVDFDSSWGHRRDIAGYAAGLELFDRRLPELMELVGEDDILILTADHGCDPSWTGTDHTREHIPVLIYGPKVKPGSLGHRETFADIGQTLATYFGTSPMDYGKNML</sequence>
<keyword id="KW-0963">Cytoplasm</keyword>
<keyword id="KW-0413">Isomerase</keyword>
<keyword id="KW-0464">Manganese</keyword>
<keyword id="KW-0479">Metal-binding</keyword>
<protein>
    <recommendedName>
        <fullName evidence="1">Phosphopentomutase</fullName>
        <ecNumber evidence="1">5.4.2.7</ecNumber>
    </recommendedName>
    <alternativeName>
        <fullName evidence="1">Phosphodeoxyribomutase</fullName>
    </alternativeName>
</protein>
<organism>
    <name type="scientific">Salmonella agona (strain SL483)</name>
    <dbReference type="NCBI Taxonomy" id="454166"/>
    <lineage>
        <taxon>Bacteria</taxon>
        <taxon>Pseudomonadati</taxon>
        <taxon>Pseudomonadota</taxon>
        <taxon>Gammaproteobacteria</taxon>
        <taxon>Enterobacterales</taxon>
        <taxon>Enterobacteriaceae</taxon>
        <taxon>Salmonella</taxon>
    </lineage>
</organism>
<evidence type="ECO:0000255" key="1">
    <source>
        <dbReference type="HAMAP-Rule" id="MF_00740"/>
    </source>
</evidence>
<reference key="1">
    <citation type="journal article" date="2011" name="J. Bacteriol.">
        <title>Comparative genomics of 28 Salmonella enterica isolates: evidence for CRISPR-mediated adaptive sublineage evolution.</title>
        <authorList>
            <person name="Fricke W.F."/>
            <person name="Mammel M.K."/>
            <person name="McDermott P.F."/>
            <person name="Tartera C."/>
            <person name="White D.G."/>
            <person name="Leclerc J.E."/>
            <person name="Ravel J."/>
            <person name="Cebula T.A."/>
        </authorList>
    </citation>
    <scope>NUCLEOTIDE SEQUENCE [LARGE SCALE GENOMIC DNA]</scope>
    <source>
        <strain>SL483</strain>
    </source>
</reference>
<dbReference type="EC" id="5.4.2.7" evidence="1"/>
<dbReference type="EMBL" id="CP001138">
    <property type="protein sequence ID" value="ACH51024.1"/>
    <property type="molecule type" value="Genomic_DNA"/>
</dbReference>
<dbReference type="RefSeq" id="WP_000816454.1">
    <property type="nucleotide sequence ID" value="NC_011149.1"/>
</dbReference>
<dbReference type="SMR" id="B5F526"/>
<dbReference type="KEGG" id="sea:SeAg_B4891"/>
<dbReference type="HOGENOM" id="CLU_053861_0_0_6"/>
<dbReference type="UniPathway" id="UPA00002">
    <property type="reaction ID" value="UER00467"/>
</dbReference>
<dbReference type="Proteomes" id="UP000008819">
    <property type="component" value="Chromosome"/>
</dbReference>
<dbReference type="GO" id="GO:0005829">
    <property type="term" value="C:cytosol"/>
    <property type="evidence" value="ECO:0007669"/>
    <property type="project" value="TreeGrafter"/>
</dbReference>
<dbReference type="GO" id="GO:0000287">
    <property type="term" value="F:magnesium ion binding"/>
    <property type="evidence" value="ECO:0007669"/>
    <property type="project" value="InterPro"/>
</dbReference>
<dbReference type="GO" id="GO:0030145">
    <property type="term" value="F:manganese ion binding"/>
    <property type="evidence" value="ECO:0007669"/>
    <property type="project" value="UniProtKB-UniRule"/>
</dbReference>
<dbReference type="GO" id="GO:0008973">
    <property type="term" value="F:phosphopentomutase activity"/>
    <property type="evidence" value="ECO:0007669"/>
    <property type="project" value="UniProtKB-UniRule"/>
</dbReference>
<dbReference type="GO" id="GO:0006018">
    <property type="term" value="P:2-deoxyribose 1-phosphate catabolic process"/>
    <property type="evidence" value="ECO:0007669"/>
    <property type="project" value="UniProtKB-UniRule"/>
</dbReference>
<dbReference type="GO" id="GO:0006015">
    <property type="term" value="P:5-phosphoribose 1-diphosphate biosynthetic process"/>
    <property type="evidence" value="ECO:0007669"/>
    <property type="project" value="UniProtKB-UniPathway"/>
</dbReference>
<dbReference type="GO" id="GO:0043094">
    <property type="term" value="P:metabolic compound salvage"/>
    <property type="evidence" value="ECO:0007669"/>
    <property type="project" value="InterPro"/>
</dbReference>
<dbReference type="GO" id="GO:0009117">
    <property type="term" value="P:nucleotide metabolic process"/>
    <property type="evidence" value="ECO:0007669"/>
    <property type="project" value="InterPro"/>
</dbReference>
<dbReference type="CDD" id="cd16009">
    <property type="entry name" value="PPM"/>
    <property type="match status" value="1"/>
</dbReference>
<dbReference type="FunFam" id="3.30.70.1250:FF:000001">
    <property type="entry name" value="Phosphopentomutase"/>
    <property type="match status" value="1"/>
</dbReference>
<dbReference type="Gene3D" id="3.40.720.10">
    <property type="entry name" value="Alkaline Phosphatase, subunit A"/>
    <property type="match status" value="1"/>
</dbReference>
<dbReference type="Gene3D" id="3.30.70.1250">
    <property type="entry name" value="Phosphopentomutase"/>
    <property type="match status" value="1"/>
</dbReference>
<dbReference type="HAMAP" id="MF_00740">
    <property type="entry name" value="Phosphopentomut"/>
    <property type="match status" value="1"/>
</dbReference>
<dbReference type="InterPro" id="IPR017850">
    <property type="entry name" value="Alkaline_phosphatase_core_sf"/>
</dbReference>
<dbReference type="InterPro" id="IPR010045">
    <property type="entry name" value="DeoB"/>
</dbReference>
<dbReference type="InterPro" id="IPR006124">
    <property type="entry name" value="Metalloenzyme"/>
</dbReference>
<dbReference type="InterPro" id="IPR024052">
    <property type="entry name" value="Phosphopentomutase_DeoB_cap_sf"/>
</dbReference>
<dbReference type="NCBIfam" id="TIGR01696">
    <property type="entry name" value="deoB"/>
    <property type="match status" value="1"/>
</dbReference>
<dbReference type="NCBIfam" id="NF003766">
    <property type="entry name" value="PRK05362.1"/>
    <property type="match status" value="1"/>
</dbReference>
<dbReference type="PANTHER" id="PTHR21110">
    <property type="entry name" value="PHOSPHOPENTOMUTASE"/>
    <property type="match status" value="1"/>
</dbReference>
<dbReference type="PANTHER" id="PTHR21110:SF0">
    <property type="entry name" value="PHOSPHOPENTOMUTASE"/>
    <property type="match status" value="1"/>
</dbReference>
<dbReference type="Pfam" id="PF01676">
    <property type="entry name" value="Metalloenzyme"/>
    <property type="match status" value="1"/>
</dbReference>
<dbReference type="PIRSF" id="PIRSF001491">
    <property type="entry name" value="Ppentomutase"/>
    <property type="match status" value="1"/>
</dbReference>
<dbReference type="SUPFAM" id="SSF53649">
    <property type="entry name" value="Alkaline phosphatase-like"/>
    <property type="match status" value="1"/>
</dbReference>
<dbReference type="SUPFAM" id="SSF143856">
    <property type="entry name" value="DeoB insert domain-like"/>
    <property type="match status" value="1"/>
</dbReference>
<name>DEOB_SALA4</name>
<proteinExistence type="inferred from homology"/>
<feature type="chain" id="PRO_1000133092" description="Phosphopentomutase">
    <location>
        <begin position="1"/>
        <end position="407"/>
    </location>
</feature>
<feature type="binding site" evidence="1">
    <location>
        <position position="10"/>
    </location>
    <ligand>
        <name>Mn(2+)</name>
        <dbReference type="ChEBI" id="CHEBI:29035"/>
        <label>1</label>
    </ligand>
</feature>
<feature type="binding site" evidence="1">
    <location>
        <position position="306"/>
    </location>
    <ligand>
        <name>Mn(2+)</name>
        <dbReference type="ChEBI" id="CHEBI:29035"/>
        <label>2</label>
    </ligand>
</feature>
<feature type="binding site" evidence="1">
    <location>
        <position position="311"/>
    </location>
    <ligand>
        <name>Mn(2+)</name>
        <dbReference type="ChEBI" id="CHEBI:29035"/>
        <label>2</label>
    </ligand>
</feature>
<feature type="binding site" evidence="1">
    <location>
        <position position="347"/>
    </location>
    <ligand>
        <name>Mn(2+)</name>
        <dbReference type="ChEBI" id="CHEBI:29035"/>
        <label>1</label>
    </ligand>
</feature>
<feature type="binding site" evidence="1">
    <location>
        <position position="348"/>
    </location>
    <ligand>
        <name>Mn(2+)</name>
        <dbReference type="ChEBI" id="CHEBI:29035"/>
        <label>1</label>
    </ligand>
</feature>
<feature type="binding site" evidence="1">
    <location>
        <position position="359"/>
    </location>
    <ligand>
        <name>Mn(2+)</name>
        <dbReference type="ChEBI" id="CHEBI:29035"/>
        <label>2</label>
    </ligand>
</feature>